<sequence>MRIVISGGGTGGHIYPALAFIKEVKRLHPDVEFLYIGTENGLEKKIVERENIPFKAIEISGFKRKLSFDNVKTVMRFLKGVQKSKSYLKEFKPDAVIGTGGYVCGPVVYAASKLKIPTIIHEQNSLPGITNKFLARYVNKVAICFDEAKAHFPSEKVVFTGNPRASEVVSIKEGKSLKEFGLDENKKTVLIFGGSRGAAPINRAVIEMQEGLKAKNYQLLYITGEVHYEKVLNELKEKGLASNMITKPFLHQMPEYLKSIDVIVARAGATTIAEVTALGIPTIFIPSPYVTANHQEINARSLEKHDAAIVLRESELTGDRLLHAIDEIAGNEEKLNQMSRLTKELGVPDAATRLYNVLKEITTT</sequence>
<proteinExistence type="inferred from homology"/>
<gene>
    <name evidence="1" type="primary">murG</name>
    <name type="ordered locus">BPUM_1415</name>
</gene>
<keyword id="KW-0131">Cell cycle</keyword>
<keyword id="KW-0132">Cell division</keyword>
<keyword id="KW-1003">Cell membrane</keyword>
<keyword id="KW-0133">Cell shape</keyword>
<keyword id="KW-0961">Cell wall biogenesis/degradation</keyword>
<keyword id="KW-0328">Glycosyltransferase</keyword>
<keyword id="KW-0472">Membrane</keyword>
<keyword id="KW-0573">Peptidoglycan synthesis</keyword>
<keyword id="KW-0808">Transferase</keyword>
<organism>
    <name type="scientific">Bacillus pumilus (strain SAFR-032)</name>
    <dbReference type="NCBI Taxonomy" id="315750"/>
    <lineage>
        <taxon>Bacteria</taxon>
        <taxon>Bacillati</taxon>
        <taxon>Bacillota</taxon>
        <taxon>Bacilli</taxon>
        <taxon>Bacillales</taxon>
        <taxon>Bacillaceae</taxon>
        <taxon>Bacillus</taxon>
    </lineage>
</organism>
<protein>
    <recommendedName>
        <fullName evidence="1">UDP-N-acetylglucosamine--N-acetylmuramyl-(pentapeptide) pyrophosphoryl-undecaprenol N-acetylglucosamine transferase</fullName>
        <ecNumber evidence="1">2.4.1.227</ecNumber>
    </recommendedName>
    <alternativeName>
        <fullName evidence="1">Undecaprenyl-PP-MurNAc-pentapeptide-UDPGlcNAc GlcNAc transferase</fullName>
    </alternativeName>
</protein>
<comment type="function">
    <text evidence="1">Cell wall formation. Catalyzes the transfer of a GlcNAc subunit on undecaprenyl-pyrophosphoryl-MurNAc-pentapeptide (lipid intermediate I) to form undecaprenyl-pyrophosphoryl-MurNAc-(pentapeptide)GlcNAc (lipid intermediate II).</text>
</comment>
<comment type="catalytic activity">
    <reaction evidence="1">
        <text>di-trans,octa-cis-undecaprenyl diphospho-N-acetyl-alpha-D-muramoyl-L-alanyl-D-glutamyl-meso-2,6-diaminopimeloyl-D-alanyl-D-alanine + UDP-N-acetyl-alpha-D-glucosamine = di-trans,octa-cis-undecaprenyl diphospho-[N-acetyl-alpha-D-glucosaminyl-(1-&gt;4)]-N-acetyl-alpha-D-muramoyl-L-alanyl-D-glutamyl-meso-2,6-diaminopimeloyl-D-alanyl-D-alanine + UDP + H(+)</text>
        <dbReference type="Rhea" id="RHEA:31227"/>
        <dbReference type="ChEBI" id="CHEBI:15378"/>
        <dbReference type="ChEBI" id="CHEBI:57705"/>
        <dbReference type="ChEBI" id="CHEBI:58223"/>
        <dbReference type="ChEBI" id="CHEBI:61387"/>
        <dbReference type="ChEBI" id="CHEBI:61388"/>
        <dbReference type="EC" id="2.4.1.227"/>
    </reaction>
</comment>
<comment type="pathway">
    <text evidence="1">Cell wall biogenesis; peptidoglycan biosynthesis.</text>
</comment>
<comment type="subcellular location">
    <subcellularLocation>
        <location evidence="1">Cell membrane</location>
        <topology evidence="1">Peripheral membrane protein</topology>
        <orientation evidence="1">Cytoplasmic side</orientation>
    </subcellularLocation>
</comment>
<comment type="similarity">
    <text evidence="1">Belongs to the glycosyltransferase 28 family. MurG subfamily.</text>
</comment>
<feature type="chain" id="PRO_1000057245" description="UDP-N-acetylglucosamine--N-acetylmuramyl-(pentapeptide) pyrophosphoryl-undecaprenol N-acetylglucosamine transferase">
    <location>
        <begin position="1"/>
        <end position="364"/>
    </location>
</feature>
<feature type="binding site" evidence="1">
    <location>
        <begin position="10"/>
        <end position="12"/>
    </location>
    <ligand>
        <name>UDP-N-acetyl-alpha-D-glucosamine</name>
        <dbReference type="ChEBI" id="CHEBI:57705"/>
    </ligand>
</feature>
<feature type="binding site" evidence="1">
    <location>
        <position position="124"/>
    </location>
    <ligand>
        <name>UDP-N-acetyl-alpha-D-glucosamine</name>
        <dbReference type="ChEBI" id="CHEBI:57705"/>
    </ligand>
</feature>
<feature type="binding site" evidence="1">
    <location>
        <position position="195"/>
    </location>
    <ligand>
        <name>UDP-N-acetyl-alpha-D-glucosamine</name>
        <dbReference type="ChEBI" id="CHEBI:57705"/>
    </ligand>
</feature>
<feature type="binding site" evidence="1">
    <location>
        <position position="295"/>
    </location>
    <ligand>
        <name>UDP-N-acetyl-alpha-D-glucosamine</name>
        <dbReference type="ChEBI" id="CHEBI:57705"/>
    </ligand>
</feature>
<name>MURG_BACP2</name>
<evidence type="ECO:0000255" key="1">
    <source>
        <dbReference type="HAMAP-Rule" id="MF_00033"/>
    </source>
</evidence>
<reference key="1">
    <citation type="journal article" date="2007" name="PLoS ONE">
        <title>Paradoxical DNA repair and peroxide resistance gene conservation in Bacillus pumilus SAFR-032.</title>
        <authorList>
            <person name="Gioia J."/>
            <person name="Yerrapragada S."/>
            <person name="Qin X."/>
            <person name="Jiang H."/>
            <person name="Igboeli O.C."/>
            <person name="Muzny D."/>
            <person name="Dugan-Rocha S."/>
            <person name="Ding Y."/>
            <person name="Hawes A."/>
            <person name="Liu W."/>
            <person name="Perez L."/>
            <person name="Kovar C."/>
            <person name="Dinh H."/>
            <person name="Lee S."/>
            <person name="Nazareth L."/>
            <person name="Blyth P."/>
            <person name="Holder M."/>
            <person name="Buhay C."/>
            <person name="Tirumalai M.R."/>
            <person name="Liu Y."/>
            <person name="Dasgupta I."/>
            <person name="Bokhetache L."/>
            <person name="Fujita M."/>
            <person name="Karouia F."/>
            <person name="Eswara Moorthy P."/>
            <person name="Siefert J."/>
            <person name="Uzman A."/>
            <person name="Buzumbo P."/>
            <person name="Verma A."/>
            <person name="Zwiya H."/>
            <person name="McWilliams B.D."/>
            <person name="Olowu A."/>
            <person name="Clinkenbeard K.D."/>
            <person name="Newcombe D."/>
            <person name="Golebiewski L."/>
            <person name="Petrosino J.F."/>
            <person name="Nicholson W.L."/>
            <person name="Fox G.E."/>
            <person name="Venkateswaran K."/>
            <person name="Highlander S.K."/>
            <person name="Weinstock G.M."/>
        </authorList>
    </citation>
    <scope>NUCLEOTIDE SEQUENCE [LARGE SCALE GENOMIC DNA]</scope>
    <source>
        <strain>SAFR-032</strain>
    </source>
</reference>
<dbReference type="EC" id="2.4.1.227" evidence="1"/>
<dbReference type="EMBL" id="CP000813">
    <property type="protein sequence ID" value="ABV62098.1"/>
    <property type="molecule type" value="Genomic_DNA"/>
</dbReference>
<dbReference type="RefSeq" id="WP_012009869.1">
    <property type="nucleotide sequence ID" value="NC_009848.4"/>
</dbReference>
<dbReference type="SMR" id="A8FCY1"/>
<dbReference type="STRING" id="315750.BPUM_1415"/>
<dbReference type="CAZy" id="GT28">
    <property type="family name" value="Glycosyltransferase Family 28"/>
</dbReference>
<dbReference type="GeneID" id="5620678"/>
<dbReference type="KEGG" id="bpu:BPUM_1415"/>
<dbReference type="eggNOG" id="COG0707">
    <property type="taxonomic scope" value="Bacteria"/>
</dbReference>
<dbReference type="HOGENOM" id="CLU_037404_0_1_9"/>
<dbReference type="OrthoDB" id="9808936at2"/>
<dbReference type="UniPathway" id="UPA00219"/>
<dbReference type="Proteomes" id="UP000001355">
    <property type="component" value="Chromosome"/>
</dbReference>
<dbReference type="GO" id="GO:0005886">
    <property type="term" value="C:plasma membrane"/>
    <property type="evidence" value="ECO:0007669"/>
    <property type="project" value="UniProtKB-SubCell"/>
</dbReference>
<dbReference type="GO" id="GO:0051991">
    <property type="term" value="F:UDP-N-acetyl-D-glucosamine:N-acetylmuramoyl-L-alanyl-D-glutamyl-meso-2,6-diaminopimelyl-D-alanyl-D-alanine-diphosphoundecaprenol 4-beta-N-acetylglucosaminlytransferase activity"/>
    <property type="evidence" value="ECO:0007669"/>
    <property type="project" value="RHEA"/>
</dbReference>
<dbReference type="GO" id="GO:0050511">
    <property type="term" value="F:undecaprenyldiphospho-muramoylpentapeptide beta-N-acetylglucosaminyltransferase activity"/>
    <property type="evidence" value="ECO:0007669"/>
    <property type="project" value="UniProtKB-UniRule"/>
</dbReference>
<dbReference type="GO" id="GO:0005975">
    <property type="term" value="P:carbohydrate metabolic process"/>
    <property type="evidence" value="ECO:0007669"/>
    <property type="project" value="InterPro"/>
</dbReference>
<dbReference type="GO" id="GO:0051301">
    <property type="term" value="P:cell division"/>
    <property type="evidence" value="ECO:0007669"/>
    <property type="project" value="UniProtKB-KW"/>
</dbReference>
<dbReference type="GO" id="GO:0071555">
    <property type="term" value="P:cell wall organization"/>
    <property type="evidence" value="ECO:0007669"/>
    <property type="project" value="UniProtKB-KW"/>
</dbReference>
<dbReference type="GO" id="GO:0030259">
    <property type="term" value="P:lipid glycosylation"/>
    <property type="evidence" value="ECO:0007669"/>
    <property type="project" value="UniProtKB-UniRule"/>
</dbReference>
<dbReference type="GO" id="GO:0009252">
    <property type="term" value="P:peptidoglycan biosynthetic process"/>
    <property type="evidence" value="ECO:0007669"/>
    <property type="project" value="UniProtKB-UniRule"/>
</dbReference>
<dbReference type="GO" id="GO:0008360">
    <property type="term" value="P:regulation of cell shape"/>
    <property type="evidence" value="ECO:0007669"/>
    <property type="project" value="UniProtKB-KW"/>
</dbReference>
<dbReference type="CDD" id="cd03785">
    <property type="entry name" value="GT28_MurG"/>
    <property type="match status" value="1"/>
</dbReference>
<dbReference type="Gene3D" id="3.40.50.2000">
    <property type="entry name" value="Glycogen Phosphorylase B"/>
    <property type="match status" value="2"/>
</dbReference>
<dbReference type="HAMAP" id="MF_00033">
    <property type="entry name" value="MurG"/>
    <property type="match status" value="1"/>
</dbReference>
<dbReference type="InterPro" id="IPR006009">
    <property type="entry name" value="GlcNAc_MurG"/>
</dbReference>
<dbReference type="InterPro" id="IPR007235">
    <property type="entry name" value="Glyco_trans_28_C"/>
</dbReference>
<dbReference type="InterPro" id="IPR004276">
    <property type="entry name" value="GlycoTrans_28_N"/>
</dbReference>
<dbReference type="NCBIfam" id="TIGR01133">
    <property type="entry name" value="murG"/>
    <property type="match status" value="1"/>
</dbReference>
<dbReference type="PANTHER" id="PTHR21015:SF22">
    <property type="entry name" value="GLYCOSYLTRANSFERASE"/>
    <property type="match status" value="1"/>
</dbReference>
<dbReference type="PANTHER" id="PTHR21015">
    <property type="entry name" value="UDP-N-ACETYLGLUCOSAMINE--N-ACETYLMURAMYL-(PENTAPEPTIDE) PYROPHOSPHORYL-UNDECAPRENOL N-ACETYLGLUCOSAMINE TRANSFERASE 1"/>
    <property type="match status" value="1"/>
</dbReference>
<dbReference type="Pfam" id="PF04101">
    <property type="entry name" value="Glyco_tran_28_C"/>
    <property type="match status" value="1"/>
</dbReference>
<dbReference type="Pfam" id="PF03033">
    <property type="entry name" value="Glyco_transf_28"/>
    <property type="match status" value="1"/>
</dbReference>
<dbReference type="SUPFAM" id="SSF53756">
    <property type="entry name" value="UDP-Glycosyltransferase/glycogen phosphorylase"/>
    <property type="match status" value="1"/>
</dbReference>
<accession>A8FCY1</accession>